<gene>
    <name type="primary">CYSD1</name>
    <name type="synonym">OAS3</name>
    <name type="ordered locus">At3g04940</name>
    <name type="ORF">T9J14.11</name>
</gene>
<evidence type="ECO:0000250" key="1"/>
<evidence type="ECO:0000269" key="2">
    <source>
    </source>
</evidence>
<evidence type="ECO:0000269" key="3">
    <source>
    </source>
</evidence>
<evidence type="ECO:0000269" key="4">
    <source>
    </source>
</evidence>
<evidence type="ECO:0000269" key="5">
    <source>
    </source>
</evidence>
<evidence type="ECO:0000305" key="6"/>
<evidence type="ECO:0000305" key="7">
    <source>
    </source>
</evidence>
<dbReference type="EC" id="2.5.1.47" evidence="2 3"/>
<dbReference type="EC" id="4.4.1.9" evidence="2 3"/>
<dbReference type="EMBL" id="AB024284">
    <property type="protein sequence ID" value="BAA78562.1"/>
    <property type="molecule type" value="mRNA"/>
</dbReference>
<dbReference type="EMBL" id="AJ011603">
    <property type="protein sequence ID" value="CAB56637.1"/>
    <property type="molecule type" value="mRNA"/>
</dbReference>
<dbReference type="EMBL" id="AC009465">
    <property type="protein sequence ID" value="AAG51407.1"/>
    <property type="status" value="ALT_SEQ"/>
    <property type="molecule type" value="Genomic_DNA"/>
</dbReference>
<dbReference type="EMBL" id="CP002686">
    <property type="protein sequence ID" value="AEE74161.1"/>
    <property type="molecule type" value="Genomic_DNA"/>
</dbReference>
<dbReference type="EMBL" id="CP002686">
    <property type="protein sequence ID" value="ANM63824.1"/>
    <property type="molecule type" value="Genomic_DNA"/>
</dbReference>
<dbReference type="EMBL" id="AY136420">
    <property type="protein sequence ID" value="AAM97086.1"/>
    <property type="molecule type" value="mRNA"/>
</dbReference>
<dbReference type="EMBL" id="BT008721">
    <property type="protein sequence ID" value="AAP42734.1"/>
    <property type="molecule type" value="mRNA"/>
</dbReference>
<dbReference type="EMBL" id="AY087675">
    <property type="protein sequence ID" value="AAM65212.1"/>
    <property type="molecule type" value="mRNA"/>
</dbReference>
<dbReference type="PIR" id="T52609">
    <property type="entry name" value="T52609"/>
</dbReference>
<dbReference type="RefSeq" id="NP_001325893.1">
    <property type="nucleotide sequence ID" value="NM_001337549.1"/>
</dbReference>
<dbReference type="RefSeq" id="NP_566243.1">
    <property type="nucleotide sequence ID" value="NM_111366.4"/>
</dbReference>
<dbReference type="SMR" id="Q9S6Z7"/>
<dbReference type="BioGRID" id="4989">
    <property type="interactions" value="2"/>
</dbReference>
<dbReference type="FunCoup" id="Q9S6Z7">
    <property type="interactions" value="1530"/>
</dbReference>
<dbReference type="IntAct" id="Q9S6Z7">
    <property type="interactions" value="1"/>
</dbReference>
<dbReference type="STRING" id="3702.Q9S6Z7"/>
<dbReference type="GlyGen" id="Q9S6Z7">
    <property type="glycosylation" value="1 site"/>
</dbReference>
<dbReference type="iPTMnet" id="Q9S6Z7"/>
<dbReference type="MetOSite" id="Q9S6Z7"/>
<dbReference type="PaxDb" id="3702-AT3G04940.1"/>
<dbReference type="ProteomicsDB" id="224701"/>
<dbReference type="EnsemblPlants" id="AT3G04940.1">
    <property type="protein sequence ID" value="AT3G04940.1"/>
    <property type="gene ID" value="AT3G04940"/>
</dbReference>
<dbReference type="EnsemblPlants" id="AT3G04940.2">
    <property type="protein sequence ID" value="AT3G04940.2"/>
    <property type="gene ID" value="AT3G04940"/>
</dbReference>
<dbReference type="GeneID" id="819654"/>
<dbReference type="Gramene" id="AT3G04940.1">
    <property type="protein sequence ID" value="AT3G04940.1"/>
    <property type="gene ID" value="AT3G04940"/>
</dbReference>
<dbReference type="Gramene" id="AT3G04940.2">
    <property type="protein sequence ID" value="AT3G04940.2"/>
    <property type="gene ID" value="AT3G04940"/>
</dbReference>
<dbReference type="KEGG" id="ath:AT3G04940"/>
<dbReference type="Araport" id="AT3G04940"/>
<dbReference type="TAIR" id="AT3G04940">
    <property type="gene designation" value="CYSD1"/>
</dbReference>
<dbReference type="eggNOG" id="KOG1252">
    <property type="taxonomic scope" value="Eukaryota"/>
</dbReference>
<dbReference type="HOGENOM" id="CLU_021018_1_0_1"/>
<dbReference type="InParanoid" id="Q9S6Z7"/>
<dbReference type="OMA" id="MENSCEI"/>
<dbReference type="PhylomeDB" id="Q9S6Z7"/>
<dbReference type="BioCyc" id="ARA:AT3G04940-MONOMER"/>
<dbReference type="SABIO-RK" id="Q9S6Z7"/>
<dbReference type="UniPathway" id="UPA00136">
    <property type="reaction ID" value="UER00200"/>
</dbReference>
<dbReference type="PRO" id="PR:Q9S6Z7"/>
<dbReference type="Proteomes" id="UP000006548">
    <property type="component" value="Chromosome 3"/>
</dbReference>
<dbReference type="ExpressionAtlas" id="Q9S6Z7">
    <property type="expression patterns" value="baseline and differential"/>
</dbReference>
<dbReference type="GO" id="GO:0005829">
    <property type="term" value="C:cytosol"/>
    <property type="evidence" value="ECO:0007005"/>
    <property type="project" value="TAIR"/>
</dbReference>
<dbReference type="GO" id="GO:0004124">
    <property type="term" value="F:cysteine synthase activity"/>
    <property type="evidence" value="ECO:0000314"/>
    <property type="project" value="TAIR"/>
</dbReference>
<dbReference type="GO" id="GO:0050017">
    <property type="term" value="F:L-3-cyanoalanine synthase activity"/>
    <property type="evidence" value="ECO:0007669"/>
    <property type="project" value="UniProtKB-EC"/>
</dbReference>
<dbReference type="GO" id="GO:0019344">
    <property type="term" value="P:cysteine biosynthetic process"/>
    <property type="evidence" value="ECO:0000314"/>
    <property type="project" value="TAIR"/>
</dbReference>
<dbReference type="GO" id="GO:0006535">
    <property type="term" value="P:cysteine biosynthetic process from serine"/>
    <property type="evidence" value="ECO:0007669"/>
    <property type="project" value="InterPro"/>
</dbReference>
<dbReference type="CDD" id="cd01561">
    <property type="entry name" value="CBS_like"/>
    <property type="match status" value="1"/>
</dbReference>
<dbReference type="FunFam" id="3.40.50.1100:FF:000006">
    <property type="entry name" value="Cysteine synthase"/>
    <property type="match status" value="1"/>
</dbReference>
<dbReference type="FunFam" id="3.40.50.1100:FF:000130">
    <property type="entry name" value="Cysteine synthase"/>
    <property type="match status" value="1"/>
</dbReference>
<dbReference type="Gene3D" id="3.40.50.1100">
    <property type="match status" value="2"/>
</dbReference>
<dbReference type="InterPro" id="IPR005856">
    <property type="entry name" value="Cys_synth"/>
</dbReference>
<dbReference type="InterPro" id="IPR050214">
    <property type="entry name" value="Cys_Synth/Cystath_Beta-Synth"/>
</dbReference>
<dbReference type="InterPro" id="IPR005859">
    <property type="entry name" value="CysK"/>
</dbReference>
<dbReference type="InterPro" id="IPR001216">
    <property type="entry name" value="P-phosphate_BS"/>
</dbReference>
<dbReference type="InterPro" id="IPR001926">
    <property type="entry name" value="TrpB-like_PALP"/>
</dbReference>
<dbReference type="InterPro" id="IPR036052">
    <property type="entry name" value="TrpB-like_PALP_sf"/>
</dbReference>
<dbReference type="NCBIfam" id="TIGR01139">
    <property type="entry name" value="cysK"/>
    <property type="match status" value="1"/>
</dbReference>
<dbReference type="NCBIfam" id="TIGR01136">
    <property type="entry name" value="cysKM"/>
    <property type="match status" value="1"/>
</dbReference>
<dbReference type="PANTHER" id="PTHR10314">
    <property type="entry name" value="CYSTATHIONINE BETA-SYNTHASE"/>
    <property type="match status" value="1"/>
</dbReference>
<dbReference type="Pfam" id="PF00291">
    <property type="entry name" value="PALP"/>
    <property type="match status" value="1"/>
</dbReference>
<dbReference type="SUPFAM" id="SSF53686">
    <property type="entry name" value="Tryptophan synthase beta subunit-like PLP-dependent enzymes"/>
    <property type="match status" value="1"/>
</dbReference>
<dbReference type="PROSITE" id="PS00901">
    <property type="entry name" value="CYS_SYNTHASE"/>
    <property type="match status" value="1"/>
</dbReference>
<feature type="chain" id="PRO_0000424458" description="Bifunctional L-3-cyanoalanine synthase/cysteine synthase D1">
    <location>
        <begin position="1"/>
        <end position="324"/>
    </location>
</feature>
<feature type="binding site" evidence="1">
    <location>
        <position position="80"/>
    </location>
    <ligand>
        <name>pyridoxal 5'-phosphate</name>
        <dbReference type="ChEBI" id="CHEBI:597326"/>
    </ligand>
</feature>
<feature type="binding site" evidence="1">
    <location>
        <begin position="184"/>
        <end position="188"/>
    </location>
    <ligand>
        <name>pyridoxal 5'-phosphate</name>
        <dbReference type="ChEBI" id="CHEBI:597326"/>
    </ligand>
</feature>
<feature type="binding site" evidence="1">
    <location>
        <position position="272"/>
    </location>
    <ligand>
        <name>pyridoxal 5'-phosphate</name>
        <dbReference type="ChEBI" id="CHEBI:597326"/>
    </ligand>
</feature>
<feature type="modified residue" description="N6-(pyridoxal phosphate)lysine" evidence="1">
    <location>
        <position position="49"/>
    </location>
</feature>
<feature type="sequence conflict" description="In Ref. 6; AAM65212." evidence="6" ref="6">
    <original>N</original>
    <variation>T</variation>
    <location>
        <position position="142"/>
    </location>
</feature>
<reference key="1">
    <citation type="journal article" date="2000" name="Plant Cell Physiol.">
        <title>Three Arabidopsis genes encoding proteins with differential activities for cysteine synthase and beta-cyanoalanine synthase.</title>
        <authorList>
            <person name="Yamaguchi Y."/>
            <person name="Nakamura T."/>
            <person name="Kusano T."/>
            <person name="Sano H."/>
        </authorList>
    </citation>
    <scope>NUCLEOTIDE SEQUENCE [MRNA]</scope>
    <scope>CATALYTIC ACTIVITY</scope>
    <scope>BIOPHYSICOCHEMICAL PROPERTIES</scope>
    <scope>TISSUE SPECIFICITY</scope>
    <scope>SUBCELLULAR LOCATION</scope>
    <source>
        <strain>cv. Columbia</strain>
    </source>
</reference>
<reference key="2">
    <citation type="journal article" date="2000" name="Plant Physiol.">
        <title>beta-Cyanoalanine synthase is a mitochondrial cysteine synthase-like protein in spinach and Arabidopsis.</title>
        <authorList>
            <person name="Hatzfeld Y."/>
            <person name="Maruyama A."/>
            <person name="Schmidt A."/>
            <person name="Noji M."/>
            <person name="Ishizawa K."/>
            <person name="Saito K."/>
        </authorList>
    </citation>
    <scope>NUCLEOTIDE SEQUENCE [MRNA]</scope>
    <scope>NOMENCLATURE</scope>
    <scope>CATALYTIC ACTIVITY</scope>
    <scope>BIOPHYSICOCHEMICAL PROPERTIES</scope>
    <source>
        <strain>cv. Columbia</strain>
    </source>
</reference>
<reference key="3">
    <citation type="journal article" date="2000" name="Nature">
        <title>Sequence and analysis of chromosome 3 of the plant Arabidopsis thaliana.</title>
        <authorList>
            <person name="Salanoubat M."/>
            <person name="Lemcke K."/>
            <person name="Rieger M."/>
            <person name="Ansorge W."/>
            <person name="Unseld M."/>
            <person name="Fartmann B."/>
            <person name="Valle G."/>
            <person name="Bloecker H."/>
            <person name="Perez-Alonso M."/>
            <person name="Obermaier B."/>
            <person name="Delseny M."/>
            <person name="Boutry M."/>
            <person name="Grivell L.A."/>
            <person name="Mache R."/>
            <person name="Puigdomenech P."/>
            <person name="De Simone V."/>
            <person name="Choisne N."/>
            <person name="Artiguenave F."/>
            <person name="Robert C."/>
            <person name="Brottier P."/>
            <person name="Wincker P."/>
            <person name="Cattolico L."/>
            <person name="Weissenbach J."/>
            <person name="Saurin W."/>
            <person name="Quetier F."/>
            <person name="Schaefer M."/>
            <person name="Mueller-Auer S."/>
            <person name="Gabel C."/>
            <person name="Fuchs M."/>
            <person name="Benes V."/>
            <person name="Wurmbach E."/>
            <person name="Drzonek H."/>
            <person name="Erfle H."/>
            <person name="Jordan N."/>
            <person name="Bangert S."/>
            <person name="Wiedelmann R."/>
            <person name="Kranz H."/>
            <person name="Voss H."/>
            <person name="Holland R."/>
            <person name="Brandt P."/>
            <person name="Nyakatura G."/>
            <person name="Vezzi A."/>
            <person name="D'Angelo M."/>
            <person name="Pallavicini A."/>
            <person name="Toppo S."/>
            <person name="Simionati B."/>
            <person name="Conrad A."/>
            <person name="Hornischer K."/>
            <person name="Kauer G."/>
            <person name="Loehnert T.-H."/>
            <person name="Nordsiek G."/>
            <person name="Reichelt J."/>
            <person name="Scharfe M."/>
            <person name="Schoen O."/>
            <person name="Bargues M."/>
            <person name="Terol J."/>
            <person name="Climent J."/>
            <person name="Navarro P."/>
            <person name="Collado C."/>
            <person name="Perez-Perez A."/>
            <person name="Ottenwaelder B."/>
            <person name="Duchemin D."/>
            <person name="Cooke R."/>
            <person name="Laudie M."/>
            <person name="Berger-Llauro C."/>
            <person name="Purnelle B."/>
            <person name="Masuy D."/>
            <person name="de Haan M."/>
            <person name="Maarse A.C."/>
            <person name="Alcaraz J.-P."/>
            <person name="Cottet A."/>
            <person name="Casacuberta E."/>
            <person name="Monfort A."/>
            <person name="Argiriou A."/>
            <person name="Flores M."/>
            <person name="Liguori R."/>
            <person name="Vitale D."/>
            <person name="Mannhaupt G."/>
            <person name="Haase D."/>
            <person name="Schoof H."/>
            <person name="Rudd S."/>
            <person name="Zaccaria P."/>
            <person name="Mewes H.-W."/>
            <person name="Mayer K.F.X."/>
            <person name="Kaul S."/>
            <person name="Town C.D."/>
            <person name="Koo H.L."/>
            <person name="Tallon L.J."/>
            <person name="Jenkins J."/>
            <person name="Rooney T."/>
            <person name="Rizzo M."/>
            <person name="Walts A."/>
            <person name="Utterback T."/>
            <person name="Fujii C.Y."/>
            <person name="Shea T.P."/>
            <person name="Creasy T.H."/>
            <person name="Haas B."/>
            <person name="Maiti R."/>
            <person name="Wu D."/>
            <person name="Peterson J."/>
            <person name="Van Aken S."/>
            <person name="Pai G."/>
            <person name="Militscher J."/>
            <person name="Sellers P."/>
            <person name="Gill J.E."/>
            <person name="Feldblyum T.V."/>
            <person name="Preuss D."/>
            <person name="Lin X."/>
            <person name="Nierman W.C."/>
            <person name="Salzberg S.L."/>
            <person name="White O."/>
            <person name="Venter J.C."/>
            <person name="Fraser C.M."/>
            <person name="Kaneko T."/>
            <person name="Nakamura Y."/>
            <person name="Sato S."/>
            <person name="Kato T."/>
            <person name="Asamizu E."/>
            <person name="Sasamoto S."/>
            <person name="Kimura T."/>
            <person name="Idesawa K."/>
            <person name="Kawashima K."/>
            <person name="Kishida Y."/>
            <person name="Kiyokawa C."/>
            <person name="Kohara M."/>
            <person name="Matsumoto M."/>
            <person name="Matsuno A."/>
            <person name="Muraki A."/>
            <person name="Nakayama S."/>
            <person name="Nakazaki N."/>
            <person name="Shinpo S."/>
            <person name="Takeuchi C."/>
            <person name="Wada T."/>
            <person name="Watanabe A."/>
            <person name="Yamada M."/>
            <person name="Yasuda M."/>
            <person name="Tabata S."/>
        </authorList>
    </citation>
    <scope>NUCLEOTIDE SEQUENCE [LARGE SCALE GENOMIC DNA]</scope>
    <source>
        <strain>cv. Columbia</strain>
    </source>
</reference>
<reference key="4">
    <citation type="journal article" date="2017" name="Plant J.">
        <title>Araport11: a complete reannotation of the Arabidopsis thaliana reference genome.</title>
        <authorList>
            <person name="Cheng C.Y."/>
            <person name="Krishnakumar V."/>
            <person name="Chan A.P."/>
            <person name="Thibaud-Nissen F."/>
            <person name="Schobel S."/>
            <person name="Town C.D."/>
        </authorList>
    </citation>
    <scope>GENOME REANNOTATION</scope>
    <source>
        <strain>cv. Columbia</strain>
    </source>
</reference>
<reference key="5">
    <citation type="journal article" date="2003" name="Science">
        <title>Empirical analysis of transcriptional activity in the Arabidopsis genome.</title>
        <authorList>
            <person name="Yamada K."/>
            <person name="Lim J."/>
            <person name="Dale J.M."/>
            <person name="Chen H."/>
            <person name="Shinn P."/>
            <person name="Palm C.J."/>
            <person name="Southwick A.M."/>
            <person name="Wu H.C."/>
            <person name="Kim C.J."/>
            <person name="Nguyen M."/>
            <person name="Pham P.K."/>
            <person name="Cheuk R.F."/>
            <person name="Karlin-Newmann G."/>
            <person name="Liu S.X."/>
            <person name="Lam B."/>
            <person name="Sakano H."/>
            <person name="Wu T."/>
            <person name="Yu G."/>
            <person name="Miranda M."/>
            <person name="Quach H.L."/>
            <person name="Tripp M."/>
            <person name="Chang C.H."/>
            <person name="Lee J.M."/>
            <person name="Toriumi M.J."/>
            <person name="Chan M.M."/>
            <person name="Tang C.C."/>
            <person name="Onodera C.S."/>
            <person name="Deng J.M."/>
            <person name="Akiyama K."/>
            <person name="Ansari Y."/>
            <person name="Arakawa T."/>
            <person name="Banh J."/>
            <person name="Banno F."/>
            <person name="Bowser L."/>
            <person name="Brooks S.Y."/>
            <person name="Carninci P."/>
            <person name="Chao Q."/>
            <person name="Choy N."/>
            <person name="Enju A."/>
            <person name="Goldsmith A.D."/>
            <person name="Gurjal M."/>
            <person name="Hansen N.F."/>
            <person name="Hayashizaki Y."/>
            <person name="Johnson-Hopson C."/>
            <person name="Hsuan V.W."/>
            <person name="Iida K."/>
            <person name="Karnes M."/>
            <person name="Khan S."/>
            <person name="Koesema E."/>
            <person name="Ishida J."/>
            <person name="Jiang P.X."/>
            <person name="Jones T."/>
            <person name="Kawai J."/>
            <person name="Kamiya A."/>
            <person name="Meyers C."/>
            <person name="Nakajima M."/>
            <person name="Narusaka M."/>
            <person name="Seki M."/>
            <person name="Sakurai T."/>
            <person name="Satou M."/>
            <person name="Tamse R."/>
            <person name="Vaysberg M."/>
            <person name="Wallender E.K."/>
            <person name="Wong C."/>
            <person name="Yamamura Y."/>
            <person name="Yuan S."/>
            <person name="Shinozaki K."/>
            <person name="Davis R.W."/>
            <person name="Theologis A."/>
            <person name="Ecker J.R."/>
        </authorList>
    </citation>
    <scope>NUCLEOTIDE SEQUENCE [LARGE SCALE MRNA]</scope>
    <source>
        <strain>cv. Columbia</strain>
    </source>
</reference>
<reference key="6">
    <citation type="submission" date="2002-03" db="EMBL/GenBank/DDBJ databases">
        <title>Full-length cDNA from Arabidopsis thaliana.</title>
        <authorList>
            <person name="Brover V.V."/>
            <person name="Troukhan M.E."/>
            <person name="Alexandrov N.A."/>
            <person name="Lu Y.-P."/>
            <person name="Flavell R.B."/>
            <person name="Feldmann K.A."/>
        </authorList>
    </citation>
    <scope>NUCLEOTIDE SEQUENCE [LARGE SCALE MRNA]</scope>
</reference>
<reference key="7">
    <citation type="journal article" date="2005" name="Photosyn. Res.">
        <title>Synthesis of the sulfur amino acids: cysteine and methionine.</title>
        <authorList>
            <person name="Wirtz M."/>
            <person name="Droux M."/>
        </authorList>
    </citation>
    <scope>REVIEW</scope>
</reference>
<reference key="8">
    <citation type="journal article" date="2008" name="Plant Cell">
        <title>Analysis of the Arabidopsis O-acetylserine(thiol)lyase gene family demonstrates compartment-specific differences in the regulation of cysteine synthesis.</title>
        <authorList>
            <person name="Heeg C."/>
            <person name="Kruse C."/>
            <person name="Jost R."/>
            <person name="Gutensohn M."/>
            <person name="Ruppert T."/>
            <person name="Wirtz M."/>
            <person name="Hell R."/>
        </authorList>
    </citation>
    <scope>IDENTIFICATION BY MASS SPECTROMETRY</scope>
    <scope>FUNCTION</scope>
</reference>
<reference key="9">
    <citation type="journal article" date="2008" name="Plant Physiol.">
        <title>Physiological roles of the beta-substituted alanine synthase gene family in Arabidopsis.</title>
        <authorList>
            <person name="Watanabe M."/>
            <person name="Kusano M."/>
            <person name="Oikawa A."/>
            <person name="Fukushima A."/>
            <person name="Noji M."/>
            <person name="Saito K."/>
        </authorList>
    </citation>
    <scope>GENE FAMILY</scope>
    <scope>DISRUPTION PHENOTYPE</scope>
</reference>
<reference key="10">
    <citation type="journal article" date="2010" name="Amino Acids">
        <title>Enzymes of cysteine synthesis show extensive and conserved modifications patterns that include N(alpha)-terminal acetylation.</title>
        <authorList>
            <person name="Wirtz M."/>
            <person name="Heeg C."/>
            <person name="Samami A.A."/>
            <person name="Ruppert T."/>
            <person name="Hell R."/>
        </authorList>
    </citation>
    <scope>IDENTIFICATION BY MASS SPECTROMETRY</scope>
</reference>
<proteinExistence type="evidence at protein level"/>
<protein>
    <recommendedName>
        <fullName>Bifunctional L-3-cyanoalanine synthase/cysteine synthase D1</fullName>
        <ecNumber evidence="2 3">2.5.1.47</ecNumber>
        <ecNumber evidence="2 3">4.4.1.9</ecNumber>
    </recommendedName>
    <alternativeName>
        <fullName>Beta-substituted Ala synthase 4;1</fullName>
        <shortName>ARAth-Bsas4;1</shortName>
    </alternativeName>
    <alternativeName>
        <fullName>Cysteine synthase D1</fullName>
        <shortName>AtcysD1</shortName>
    </alternativeName>
    <alternativeName>
        <fullName>O-acetylserine (thiol)-lyase 3</fullName>
    </alternativeName>
</protein>
<organism>
    <name type="scientific">Arabidopsis thaliana</name>
    <name type="common">Mouse-ear cress</name>
    <dbReference type="NCBI Taxonomy" id="3702"/>
    <lineage>
        <taxon>Eukaryota</taxon>
        <taxon>Viridiplantae</taxon>
        <taxon>Streptophyta</taxon>
        <taxon>Embryophyta</taxon>
        <taxon>Tracheophyta</taxon>
        <taxon>Spermatophyta</taxon>
        <taxon>Magnoliopsida</taxon>
        <taxon>eudicotyledons</taxon>
        <taxon>Gunneridae</taxon>
        <taxon>Pentapetalae</taxon>
        <taxon>rosids</taxon>
        <taxon>malvids</taxon>
        <taxon>Brassicales</taxon>
        <taxon>Brassicaceae</taxon>
        <taxon>Camelineae</taxon>
        <taxon>Arabidopsis</taxon>
    </lineage>
</organism>
<accession>Q9S6Z7</accession>
<accession>Q8LAQ6</accession>
<accession>Q9CAV8</accession>
<comment type="function">
    <text evidence="5">Acts as a cysteine synthase. The cysteine synthesis reaction is more efficient than the cyanoalanine synthase activity.</text>
</comment>
<comment type="catalytic activity">
    <reaction evidence="2 3">
        <text>O-acetyl-L-serine + hydrogen sulfide = L-cysteine + acetate</text>
        <dbReference type="Rhea" id="RHEA:14829"/>
        <dbReference type="ChEBI" id="CHEBI:29919"/>
        <dbReference type="ChEBI" id="CHEBI:30089"/>
        <dbReference type="ChEBI" id="CHEBI:35235"/>
        <dbReference type="ChEBI" id="CHEBI:58340"/>
        <dbReference type="EC" id="2.5.1.47"/>
    </reaction>
</comment>
<comment type="catalytic activity">
    <reaction evidence="2 3">
        <text>hydrogen cyanide + L-cysteine = 3-cyano-L-alanine + hydrogen sulfide + H(+)</text>
        <dbReference type="Rhea" id="RHEA:17821"/>
        <dbReference type="ChEBI" id="CHEBI:15378"/>
        <dbReference type="ChEBI" id="CHEBI:18407"/>
        <dbReference type="ChEBI" id="CHEBI:29919"/>
        <dbReference type="ChEBI" id="CHEBI:35235"/>
        <dbReference type="ChEBI" id="CHEBI:77860"/>
        <dbReference type="EC" id="4.4.1.9"/>
    </reaction>
</comment>
<comment type="cofactor">
    <cofactor evidence="6">
        <name>pyridoxal 5'-phosphate</name>
        <dbReference type="ChEBI" id="CHEBI:597326"/>
    </cofactor>
</comment>
<comment type="biophysicochemical properties">
    <kinetics>
        <KM evidence="3">0.69 mM for O(3)-acetyl-L-serine for the cysteine synthase activity</KM>
        <KM evidence="2">4.51 mM for O(3)-acetyl-L-serine for the cysteine synthase activity</KM>
        <KM evidence="3">4.98 mM for Na(2)S for the cysteine synthase activity</KM>
        <KM evidence="2">0.07 mM for Na(2)S for the cysteine synthase activity</KM>
        <Vmax evidence="3">0.2 umol/min/mg enzyme for L-cysteine for the cysteine synthase activity</Vmax>
    </kinetics>
</comment>
<comment type="pathway">
    <text>Amino-acid biosynthesis; L-cysteine biosynthesis; L-cysteine from L-serine: step 2/2.</text>
</comment>
<comment type="subcellular location">
    <subcellularLocation>
        <location evidence="7">Cytoplasm</location>
    </subcellularLocation>
</comment>
<comment type="tissue specificity">
    <text evidence="2">Mainly expressed in flowers.</text>
</comment>
<comment type="disruption phenotype">
    <text evidence="4">No visible phenotype.</text>
</comment>
<comment type="similarity">
    <text evidence="6">Belongs to the cysteine synthase/cystathionine beta-synthase family.</text>
</comment>
<comment type="sequence caution" evidence="6">
    <conflict type="erroneous gene model prediction">
        <sequence resource="EMBL-CDS" id="AAG51407"/>
    </conflict>
</comment>
<name>CYSD1_ARATH</name>
<sequence>MEEDRCSIKDDATQLIGNTPMVYLNNIVDGCVARIAAKLEMMEPCSSVKERIAYGMIKDAEDKGLITPGKSTLIEATSGNTGIGLAFIGAAKGYKVVLTMPSSMSLERKIILLALGAEVHLTDPSKGVQGIIDKAEEICSKNPDSIMLEQFKNPSNPQTHYRTTGPEIWRDSAGEVDILVAGVGTGGTLSGSGRFLKEKNKDFKVYGVEPTESAVISGGKPGTHLIQGIGAGLIPDNLDFNVLDEVIQVTSVEAIETAKLLALKEGLLVGISSGAAAAAAIKVAKRPENAGKLIVVIFPSGGERYLSTSLFESVRHEAENLPIQ</sequence>
<keyword id="KW-0028">Amino-acid biosynthesis</keyword>
<keyword id="KW-0198">Cysteine biosynthesis</keyword>
<keyword id="KW-0963">Cytoplasm</keyword>
<keyword id="KW-0456">Lyase</keyword>
<keyword id="KW-0663">Pyridoxal phosphate</keyword>
<keyword id="KW-1185">Reference proteome</keyword>
<keyword id="KW-0808">Transferase</keyword>